<organism>
    <name type="scientific">Penaeus monodon</name>
    <name type="common">Giant tiger prawn</name>
    <dbReference type="NCBI Taxonomy" id="6687"/>
    <lineage>
        <taxon>Eukaryota</taxon>
        <taxon>Metazoa</taxon>
        <taxon>Ecdysozoa</taxon>
        <taxon>Arthropoda</taxon>
        <taxon>Crustacea</taxon>
        <taxon>Multicrustacea</taxon>
        <taxon>Malacostraca</taxon>
        <taxon>Eumalacostraca</taxon>
        <taxon>Eucarida</taxon>
        <taxon>Decapoda</taxon>
        <taxon>Dendrobranchiata</taxon>
        <taxon>Penaeoidea</taxon>
        <taxon>Penaeidae</taxon>
        <taxon>Penaeus</taxon>
    </lineage>
</organism>
<protein>
    <recommendedName>
        <fullName>Crustacean hyperglycemic hormones 2</fullName>
    </recommendedName>
    <alternativeName>
        <fullName>Pm-SGP-II</fullName>
    </alternativeName>
    <component>
        <recommendedName>
            <fullName>CHH precursor-related peptide 2</fullName>
            <shortName>CPRP 2</shortName>
        </recommendedName>
    </component>
    <component>
        <recommendedName>
            <fullName>Crustacean hyperglycemic hormone 2</fullName>
            <shortName>CHH 2</shortName>
        </recommendedName>
    </component>
</protein>
<feature type="signal peptide" evidence="2">
    <location>
        <begin position="1"/>
        <end position="22"/>
    </location>
</feature>
<feature type="peptide" id="PRO_0000019063" description="CHH precursor-related peptide 2">
    <location>
        <begin position="23"/>
        <end position="42"/>
    </location>
</feature>
<feature type="peptide" id="PRO_0000019064" description="Crustacean hyperglycemic hormone 2">
    <location>
        <begin position="45"/>
        <end position="116"/>
    </location>
</feature>
<feature type="modified residue" description="Valine amide" evidence="1">
    <location>
        <position position="116"/>
    </location>
</feature>
<feature type="disulfide bond" evidence="1">
    <location>
        <begin position="51"/>
        <end position="87"/>
    </location>
</feature>
<feature type="disulfide bond" evidence="1">
    <location>
        <begin position="67"/>
        <end position="83"/>
    </location>
</feature>
<feature type="disulfide bond" evidence="1">
    <location>
        <begin position="70"/>
        <end position="96"/>
    </location>
</feature>
<feature type="sequence conflict" description="In Ref. 2; AAD03607." evidence="3" ref="2">
    <original>A</original>
    <variation>K</variation>
    <location>
        <position position="52"/>
    </location>
</feature>
<feature type="sequence conflict" description="In Ref. 2; AAD03607." evidence="3" ref="2">
    <original>N</original>
    <variation>D</variation>
    <location>
        <position position="56"/>
    </location>
</feature>
<feature type="sequence conflict" description="In Ref. 2; AAD03607." evidence="3" ref="2">
    <original>R</original>
    <variation>G</variation>
    <location>
        <position position="62"/>
    </location>
</feature>
<feature type="sequence conflict" description="In Ref. 2; AAD03607." evidence="3" ref="2">
    <original>P</original>
    <variation>S</variation>
    <location>
        <position position="91"/>
    </location>
</feature>
<reference key="1">
    <citation type="journal article" date="2000" name="Mar. Biotechnol.">
        <title>Five crustacean hyperglycemic family hormones of Penaeus monodon: complementary DNA sequence and identification in single sinus glands by electrospray ionization-Fourier transform mass spectrometry.</title>
        <authorList>
            <person name="Davey M.L."/>
            <person name="Hall M.R."/>
            <person name="Willis R.H."/>
            <person name="Oliver R.W.A."/>
            <person name="Thurn M.J."/>
            <person name="Wilson K.J."/>
        </authorList>
    </citation>
    <scope>NUCLEOTIDE SEQUENCE [MRNA]</scope>
    <source>
        <tissue>Eyestalk</tissue>
    </source>
</reference>
<reference key="2">
    <citation type="submission" date="1998-11" db="EMBL/GenBank/DDBJ databases">
        <title>Molecular cloning and sequence analysis of cDNAs encoding crustacean hyperglycemic hormone-like neuropeptides from the tiger prawn Penaeus monodon.</title>
        <authorList>
            <person name="Chen H.-Y."/>
            <person name="Cheng J.-H."/>
            <person name="Huang C.-J."/>
        </authorList>
    </citation>
    <scope>NUCLEOTIDE SEQUENCE [MRNA] OF 50-118</scope>
</reference>
<sequence length="118" mass="13137">MTAFRLVAVALVVVVACSTTWARSLEGSSSPVASLIRGRSLSKRANFDPSCAGVYNRELLGRLSRLCDDCYNVFREPKVATECRSNCFYNPVFVQCLEYLIPADLHEEYQAHVQTVGK</sequence>
<name>CHH2_PENMO</name>
<gene>
    <name type="primary">CHH2</name>
</gene>
<proteinExistence type="inferred from homology"/>
<evidence type="ECO:0000250" key="1"/>
<evidence type="ECO:0000255" key="2"/>
<evidence type="ECO:0000305" key="3"/>
<comment type="function">
    <text evidence="1">Hormone found in the sinus gland of isopods and decapods which controls the blood sugar level. Has a secretagogue action over the amylase released from the midgut gland. May act as a stress hormone and may be involved in the control of molting and reproduction (By similarity).</text>
</comment>
<comment type="subcellular location">
    <subcellularLocation>
        <location>Secreted</location>
    </subcellularLocation>
</comment>
<comment type="similarity">
    <text evidence="3">Belongs to the arthropod CHH/MIH/GIH/VIH hormone family.</text>
</comment>
<keyword id="KW-0027">Amidation</keyword>
<keyword id="KW-0119">Carbohydrate metabolism</keyword>
<keyword id="KW-0165">Cleavage on pair of basic residues</keyword>
<keyword id="KW-1015">Disulfide bond</keyword>
<keyword id="KW-0313">Glucose metabolism</keyword>
<keyword id="KW-0372">Hormone</keyword>
<keyword id="KW-0527">Neuropeptide</keyword>
<keyword id="KW-0964">Secreted</keyword>
<keyword id="KW-0732">Signal</keyword>
<accession>O97384</accession>
<accession>O96678</accession>
<dbReference type="EMBL" id="AF104387">
    <property type="protein sequence ID" value="AAC84143.1"/>
    <property type="molecule type" value="mRNA"/>
</dbReference>
<dbReference type="EMBL" id="AF104931">
    <property type="protein sequence ID" value="AAD03607.1"/>
    <property type="molecule type" value="mRNA"/>
</dbReference>
<dbReference type="SMR" id="O97384"/>
<dbReference type="OrthoDB" id="6330469at2759"/>
<dbReference type="GO" id="GO:0005576">
    <property type="term" value="C:extracellular region"/>
    <property type="evidence" value="ECO:0007669"/>
    <property type="project" value="UniProtKB-SubCell"/>
</dbReference>
<dbReference type="GO" id="GO:0005184">
    <property type="term" value="F:neuropeptide hormone activity"/>
    <property type="evidence" value="ECO:0007669"/>
    <property type="project" value="InterPro"/>
</dbReference>
<dbReference type="GO" id="GO:0007623">
    <property type="term" value="P:circadian rhythm"/>
    <property type="evidence" value="ECO:0007669"/>
    <property type="project" value="TreeGrafter"/>
</dbReference>
<dbReference type="GO" id="GO:0006006">
    <property type="term" value="P:glucose metabolic process"/>
    <property type="evidence" value="ECO:0007669"/>
    <property type="project" value="UniProtKB-KW"/>
</dbReference>
<dbReference type="GO" id="GO:0007218">
    <property type="term" value="P:neuropeptide signaling pathway"/>
    <property type="evidence" value="ECO:0007669"/>
    <property type="project" value="UniProtKB-KW"/>
</dbReference>
<dbReference type="Gene3D" id="1.10.2010.10">
    <property type="entry name" value="Crustacean CHH/MIH/GIH neurohormone"/>
    <property type="match status" value="1"/>
</dbReference>
<dbReference type="InterPro" id="IPR018251">
    <property type="entry name" value="Crust_neurhormone_CS"/>
</dbReference>
<dbReference type="InterPro" id="IPR031098">
    <property type="entry name" value="Crust_neurohorm"/>
</dbReference>
<dbReference type="InterPro" id="IPR035957">
    <property type="entry name" value="Crust_neurohorm_sf"/>
</dbReference>
<dbReference type="InterPro" id="IPR001166">
    <property type="entry name" value="Hyperglycemic"/>
</dbReference>
<dbReference type="InterPro" id="IPR000346">
    <property type="entry name" value="Hyperglycemic1"/>
</dbReference>
<dbReference type="PANTHER" id="PTHR35981">
    <property type="entry name" value="ION TRANSPORT PEPTIDE, ISOFORM C"/>
    <property type="match status" value="1"/>
</dbReference>
<dbReference type="PANTHER" id="PTHR35981:SF2">
    <property type="entry name" value="ION TRANSPORT PEPTIDE, ISOFORM C"/>
    <property type="match status" value="1"/>
</dbReference>
<dbReference type="Pfam" id="PF01147">
    <property type="entry name" value="Crust_neurohorm"/>
    <property type="match status" value="1"/>
</dbReference>
<dbReference type="PRINTS" id="PR00548">
    <property type="entry name" value="HYPRGLYCEMC1"/>
</dbReference>
<dbReference type="PRINTS" id="PR00550">
    <property type="entry name" value="HYPRGLYCEMIC"/>
</dbReference>
<dbReference type="SUPFAM" id="SSF81778">
    <property type="entry name" value="Crustacean CHH/MIH/GIH neurohormone"/>
    <property type="match status" value="1"/>
</dbReference>
<dbReference type="PROSITE" id="PS01250">
    <property type="entry name" value="CHH_MIH_GIH"/>
    <property type="match status" value="1"/>
</dbReference>